<sequence length="340" mass="38423">MSIDLDWDGMINSDEIDVAEWLRSLLDKQFQQLDLPRNIRSVSITTLSLGTIPPELEIKHISDPFPEFYAEEEAAADSHYLPPLHPPQQRRSAPSTPHIHTNTTNPIDRGIASYFHPLGSAPLMSGLRTPLNIPSWATNGHTRTSSRLPLNTPIEAEIVESVRESTAPRTPEEREQQPVPEDREDDLQVLFRVKYTGDIRIGVEATLRLNYPSDDVVLLPMKLHLSHININSLAIMAYIKKSIYLSVICDLDDSDHAVARTGRERLDIIRDVKIDSEIGHHDTNGAALRNVGKVDRFIVDKIRSLLKAEIAWPSWIKVSMEDEDSDDEEGEEEGDQEDEH</sequence>
<comment type="function">
    <text evidence="1">Component of the ERMES/MDM complex, which serves as a molecular tether to connect the endoplasmic reticulum (ER) and mitochondria. Components of this complex are involved in the control of mitochondrial shape and protein biogenesis, and function in nonvesicular lipid trafficking between the ER and mitochondria. MDM12 is required for the interaction of the ER-resident membrane protein MMM1 and the outer mitochondrial membrane-resident beta-barrel protein MDM10. The MDM12-MMM1 subcomplex functions in the major beta-barrel assembly pathway that is responsible for biogenesis of all mitochondrial outer membrane beta-barrel proteins, and acts in a late step after the SAM complex. The MDM10-MDM12-MMM1 subcomplex further acts in the TOM40-specific pathway after the action of the MDM12-MMM1 complex. Essential for establishing and maintaining the structure of mitochondria and maintenance of mtDNA nucleoids.</text>
</comment>
<comment type="subunit">
    <text evidence="1">Component of the ER-mitochondria encounter structure (ERMES) or MDM complex, composed of MMM1, MDM10, MDM12 and MDM34. A MMM1 homodimer associates with one molecule of MDM12 on each side in a pairwise head-to-tail manner, and the SMP-LTD domains of MMM1 and MDM12 generate a continuous hydrophobic tunnel for phospholipid trafficking.</text>
</comment>
<comment type="subcellular location">
    <subcellularLocation>
        <location evidence="1">Mitochondrion outer membrane</location>
        <topology evidence="1">Peripheral membrane protein</topology>
        <orientation evidence="1">Cytoplasmic side</orientation>
    </subcellularLocation>
    <subcellularLocation>
        <location evidence="1">Endoplasmic reticulum membrane</location>
        <topology evidence="1">Peripheral membrane protein</topology>
        <orientation evidence="1">Cytoplasmic side</orientation>
    </subcellularLocation>
    <text evidence="1">The ERMES/MDM complex localizes to a few discrete foci (around 10 per single cell), that represent mitochondria-endoplasmic reticulum junctions. These foci are often found next to mtDNA nucleoids.</text>
</comment>
<comment type="domain">
    <text evidence="1">The SMP-LTD domain is a barrel-like domain that can bind various types of glycerophospholipids in its interior and mediate their transfer between two adjacent bilayers.</text>
</comment>
<comment type="similarity">
    <text evidence="1">Belongs to the MDM12 family.</text>
</comment>
<organism>
    <name type="scientific">Yarrowia lipolytica (strain CLIB 122 / E 150)</name>
    <name type="common">Yeast</name>
    <name type="synonym">Candida lipolytica</name>
    <dbReference type="NCBI Taxonomy" id="284591"/>
    <lineage>
        <taxon>Eukaryota</taxon>
        <taxon>Fungi</taxon>
        <taxon>Dikarya</taxon>
        <taxon>Ascomycota</taxon>
        <taxon>Saccharomycotina</taxon>
        <taxon>Dipodascomycetes</taxon>
        <taxon>Dipodascales</taxon>
        <taxon>Dipodascales incertae sedis</taxon>
        <taxon>Yarrowia</taxon>
    </lineage>
</organism>
<keyword id="KW-0256">Endoplasmic reticulum</keyword>
<keyword id="KW-0445">Lipid transport</keyword>
<keyword id="KW-0446">Lipid-binding</keyword>
<keyword id="KW-0472">Membrane</keyword>
<keyword id="KW-0496">Mitochondrion</keyword>
<keyword id="KW-1000">Mitochondrion outer membrane</keyword>
<keyword id="KW-1185">Reference proteome</keyword>
<keyword id="KW-0813">Transport</keyword>
<name>MDM12_YARLI</name>
<dbReference type="EMBL" id="CR382127">
    <property type="protein sequence ID" value="CAG83621.1"/>
    <property type="molecule type" value="Genomic_DNA"/>
</dbReference>
<dbReference type="RefSeq" id="XP_499698.1">
    <property type="nucleotide sequence ID" value="XM_499698.1"/>
</dbReference>
<dbReference type="SMR" id="Q6CI13"/>
<dbReference type="FunCoup" id="Q6CI13">
    <property type="interactions" value="54"/>
</dbReference>
<dbReference type="STRING" id="284591.Q6CI13"/>
<dbReference type="EnsemblFungi" id="CAG83621">
    <property type="protein sequence ID" value="CAG83621"/>
    <property type="gene ID" value="YALI0_A02585g"/>
</dbReference>
<dbReference type="KEGG" id="yli:2906350"/>
<dbReference type="VEuPathDB" id="FungiDB:YALI0_A02585g"/>
<dbReference type="HOGENOM" id="CLU_026794_2_0_1"/>
<dbReference type="InParanoid" id="Q6CI13"/>
<dbReference type="OMA" id="AAWPSWI"/>
<dbReference type="OrthoDB" id="110099at4891"/>
<dbReference type="Proteomes" id="UP000001300">
    <property type="component" value="Chromosome A"/>
</dbReference>
<dbReference type="GO" id="GO:0005789">
    <property type="term" value="C:endoplasmic reticulum membrane"/>
    <property type="evidence" value="ECO:0007669"/>
    <property type="project" value="UniProtKB-SubCell"/>
</dbReference>
<dbReference type="GO" id="GO:0032865">
    <property type="term" value="C:ERMES complex"/>
    <property type="evidence" value="ECO:0000318"/>
    <property type="project" value="GO_Central"/>
</dbReference>
<dbReference type="GO" id="GO:0008289">
    <property type="term" value="F:lipid binding"/>
    <property type="evidence" value="ECO:0007669"/>
    <property type="project" value="UniProtKB-KW"/>
</dbReference>
<dbReference type="GO" id="GO:0000002">
    <property type="term" value="P:mitochondrial genome maintenance"/>
    <property type="evidence" value="ECO:0007669"/>
    <property type="project" value="UniProtKB-UniRule"/>
</dbReference>
<dbReference type="GO" id="GO:1990456">
    <property type="term" value="P:mitochondrion-endoplasmic reticulum membrane tethering"/>
    <property type="evidence" value="ECO:0000318"/>
    <property type="project" value="GO_Central"/>
</dbReference>
<dbReference type="GO" id="GO:0015914">
    <property type="term" value="P:phospholipid transport"/>
    <property type="evidence" value="ECO:0000318"/>
    <property type="project" value="GO_Central"/>
</dbReference>
<dbReference type="GO" id="GO:0045040">
    <property type="term" value="P:protein insertion into mitochondrial outer membrane"/>
    <property type="evidence" value="ECO:0007669"/>
    <property type="project" value="UniProtKB-UniRule"/>
</dbReference>
<dbReference type="CDD" id="cd21672">
    <property type="entry name" value="SMP_Mdm12"/>
    <property type="match status" value="1"/>
</dbReference>
<dbReference type="HAMAP" id="MF_03104">
    <property type="entry name" value="Mdm12"/>
    <property type="match status" value="1"/>
</dbReference>
<dbReference type="InterPro" id="IPR027532">
    <property type="entry name" value="Mdm12"/>
</dbReference>
<dbReference type="InterPro" id="IPR031468">
    <property type="entry name" value="SMP_LBD"/>
</dbReference>
<dbReference type="PANTHER" id="PTHR28204">
    <property type="entry name" value="MITOCHONDRIAL DISTRIBUTION AND MORPHOLOGY PROTEIN 12"/>
    <property type="match status" value="1"/>
</dbReference>
<dbReference type="PANTHER" id="PTHR28204:SF1">
    <property type="entry name" value="MITOCHONDRIAL DISTRIBUTION AND MORPHOLOGY PROTEIN 12"/>
    <property type="match status" value="1"/>
</dbReference>
<dbReference type="PROSITE" id="PS51847">
    <property type="entry name" value="SMP"/>
    <property type="match status" value="1"/>
</dbReference>
<protein>
    <recommendedName>
        <fullName evidence="1">Mitochondrial distribution and morphology protein 12</fullName>
    </recommendedName>
    <alternativeName>
        <fullName evidence="1">Mitochondrial inheritance component MDM12</fullName>
    </alternativeName>
</protein>
<proteinExistence type="inferred from homology"/>
<reference key="1">
    <citation type="journal article" date="2004" name="Nature">
        <title>Genome evolution in yeasts.</title>
        <authorList>
            <person name="Dujon B."/>
            <person name="Sherman D."/>
            <person name="Fischer G."/>
            <person name="Durrens P."/>
            <person name="Casaregola S."/>
            <person name="Lafontaine I."/>
            <person name="de Montigny J."/>
            <person name="Marck C."/>
            <person name="Neuveglise C."/>
            <person name="Talla E."/>
            <person name="Goffard N."/>
            <person name="Frangeul L."/>
            <person name="Aigle M."/>
            <person name="Anthouard V."/>
            <person name="Babour A."/>
            <person name="Barbe V."/>
            <person name="Barnay S."/>
            <person name="Blanchin S."/>
            <person name="Beckerich J.-M."/>
            <person name="Beyne E."/>
            <person name="Bleykasten C."/>
            <person name="Boisrame A."/>
            <person name="Boyer J."/>
            <person name="Cattolico L."/>
            <person name="Confanioleri F."/>
            <person name="de Daruvar A."/>
            <person name="Despons L."/>
            <person name="Fabre E."/>
            <person name="Fairhead C."/>
            <person name="Ferry-Dumazet H."/>
            <person name="Groppi A."/>
            <person name="Hantraye F."/>
            <person name="Hennequin C."/>
            <person name="Jauniaux N."/>
            <person name="Joyet P."/>
            <person name="Kachouri R."/>
            <person name="Kerrest A."/>
            <person name="Koszul R."/>
            <person name="Lemaire M."/>
            <person name="Lesur I."/>
            <person name="Ma L."/>
            <person name="Muller H."/>
            <person name="Nicaud J.-M."/>
            <person name="Nikolski M."/>
            <person name="Oztas S."/>
            <person name="Ozier-Kalogeropoulos O."/>
            <person name="Pellenz S."/>
            <person name="Potier S."/>
            <person name="Richard G.-F."/>
            <person name="Straub M.-L."/>
            <person name="Suleau A."/>
            <person name="Swennen D."/>
            <person name="Tekaia F."/>
            <person name="Wesolowski-Louvel M."/>
            <person name="Westhof E."/>
            <person name="Wirth B."/>
            <person name="Zeniou-Meyer M."/>
            <person name="Zivanovic Y."/>
            <person name="Bolotin-Fukuhara M."/>
            <person name="Thierry A."/>
            <person name="Bouchier C."/>
            <person name="Caudron B."/>
            <person name="Scarpelli C."/>
            <person name="Gaillardin C."/>
            <person name="Weissenbach J."/>
            <person name="Wincker P."/>
            <person name="Souciet J.-L."/>
        </authorList>
    </citation>
    <scope>NUCLEOTIDE SEQUENCE [LARGE SCALE GENOMIC DNA]</scope>
    <source>
        <strain>CLIB 122 / E 150</strain>
    </source>
</reference>
<gene>
    <name evidence="1" type="primary">MDM12</name>
    <name type="ordered locus">YALI0A02585g</name>
</gene>
<feature type="chain" id="PRO_0000384318" description="Mitochondrial distribution and morphology protein 12">
    <location>
        <begin position="1"/>
        <end position="340"/>
    </location>
</feature>
<feature type="domain" description="SMP-LTD" evidence="1">
    <location>
        <begin position="1"/>
        <end position="321"/>
    </location>
</feature>
<feature type="region of interest" description="Disordered" evidence="2">
    <location>
        <begin position="79"/>
        <end position="107"/>
    </location>
</feature>
<feature type="region of interest" description="Disordered" evidence="2">
    <location>
        <begin position="161"/>
        <end position="184"/>
    </location>
</feature>
<feature type="region of interest" description="Disordered" evidence="2">
    <location>
        <begin position="319"/>
        <end position="340"/>
    </location>
</feature>
<feature type="compositionally biased region" description="Polar residues" evidence="2">
    <location>
        <begin position="89"/>
        <end position="106"/>
    </location>
</feature>
<feature type="compositionally biased region" description="Acidic residues" evidence="2">
    <location>
        <begin position="321"/>
        <end position="340"/>
    </location>
</feature>
<accession>Q6CI13</accession>
<evidence type="ECO:0000255" key="1">
    <source>
        <dbReference type="HAMAP-Rule" id="MF_03104"/>
    </source>
</evidence>
<evidence type="ECO:0000256" key="2">
    <source>
        <dbReference type="SAM" id="MobiDB-lite"/>
    </source>
</evidence>